<sequence length="211" mass="23653">MQEIIASVDHIKFDLEIAVEQQLGAQPLPFPGMDKSGAAVCEFFLKAACGKGGMCPFRHISGEKTVVCKHWLRGLCKKGDQCEFLHEYDMTKMPECYFYSKFGPLCRHRHTRRVICVNYLVGFCPEGPSCKFMHPRFELPMGTTEQPPLPQQTQPPTKRAPQVIGVMQSQNSSAGNRGPRPLEQVTCYKCGEKGHYANRCTKGHLAFLSGQ</sequence>
<reference key="1">
    <citation type="journal article" date="2005" name="Science">
        <title>The transcriptional landscape of the mammalian genome.</title>
        <authorList>
            <person name="Carninci P."/>
            <person name="Kasukawa T."/>
            <person name="Katayama S."/>
            <person name="Gough J."/>
            <person name="Frith M.C."/>
            <person name="Maeda N."/>
            <person name="Oyama R."/>
            <person name="Ravasi T."/>
            <person name="Lenhard B."/>
            <person name="Wells C."/>
            <person name="Kodzius R."/>
            <person name="Shimokawa K."/>
            <person name="Bajic V.B."/>
            <person name="Brenner S.E."/>
            <person name="Batalov S."/>
            <person name="Forrest A.R."/>
            <person name="Zavolan M."/>
            <person name="Davis M.J."/>
            <person name="Wilming L.G."/>
            <person name="Aidinis V."/>
            <person name="Allen J.E."/>
            <person name="Ambesi-Impiombato A."/>
            <person name="Apweiler R."/>
            <person name="Aturaliya R.N."/>
            <person name="Bailey T.L."/>
            <person name="Bansal M."/>
            <person name="Baxter L."/>
            <person name="Beisel K.W."/>
            <person name="Bersano T."/>
            <person name="Bono H."/>
            <person name="Chalk A.M."/>
            <person name="Chiu K.P."/>
            <person name="Choudhary V."/>
            <person name="Christoffels A."/>
            <person name="Clutterbuck D.R."/>
            <person name="Crowe M.L."/>
            <person name="Dalla E."/>
            <person name="Dalrymple B.P."/>
            <person name="de Bono B."/>
            <person name="Della Gatta G."/>
            <person name="di Bernardo D."/>
            <person name="Down T."/>
            <person name="Engstrom P."/>
            <person name="Fagiolini M."/>
            <person name="Faulkner G."/>
            <person name="Fletcher C.F."/>
            <person name="Fukushima T."/>
            <person name="Furuno M."/>
            <person name="Futaki S."/>
            <person name="Gariboldi M."/>
            <person name="Georgii-Hemming P."/>
            <person name="Gingeras T.R."/>
            <person name="Gojobori T."/>
            <person name="Green R.E."/>
            <person name="Gustincich S."/>
            <person name="Harbers M."/>
            <person name="Hayashi Y."/>
            <person name="Hensch T.K."/>
            <person name="Hirokawa N."/>
            <person name="Hill D."/>
            <person name="Huminiecki L."/>
            <person name="Iacono M."/>
            <person name="Ikeo K."/>
            <person name="Iwama A."/>
            <person name="Ishikawa T."/>
            <person name="Jakt M."/>
            <person name="Kanapin A."/>
            <person name="Katoh M."/>
            <person name="Kawasawa Y."/>
            <person name="Kelso J."/>
            <person name="Kitamura H."/>
            <person name="Kitano H."/>
            <person name="Kollias G."/>
            <person name="Krishnan S.P."/>
            <person name="Kruger A."/>
            <person name="Kummerfeld S.K."/>
            <person name="Kurochkin I.V."/>
            <person name="Lareau L.F."/>
            <person name="Lazarevic D."/>
            <person name="Lipovich L."/>
            <person name="Liu J."/>
            <person name="Liuni S."/>
            <person name="McWilliam S."/>
            <person name="Madan Babu M."/>
            <person name="Madera M."/>
            <person name="Marchionni L."/>
            <person name="Matsuda H."/>
            <person name="Matsuzawa S."/>
            <person name="Miki H."/>
            <person name="Mignone F."/>
            <person name="Miyake S."/>
            <person name="Morris K."/>
            <person name="Mottagui-Tabar S."/>
            <person name="Mulder N."/>
            <person name="Nakano N."/>
            <person name="Nakauchi H."/>
            <person name="Ng P."/>
            <person name="Nilsson R."/>
            <person name="Nishiguchi S."/>
            <person name="Nishikawa S."/>
            <person name="Nori F."/>
            <person name="Ohara O."/>
            <person name="Okazaki Y."/>
            <person name="Orlando V."/>
            <person name="Pang K.C."/>
            <person name="Pavan W.J."/>
            <person name="Pavesi G."/>
            <person name="Pesole G."/>
            <person name="Petrovsky N."/>
            <person name="Piazza S."/>
            <person name="Reed J."/>
            <person name="Reid J.F."/>
            <person name="Ring B.Z."/>
            <person name="Ringwald M."/>
            <person name="Rost B."/>
            <person name="Ruan Y."/>
            <person name="Salzberg S.L."/>
            <person name="Sandelin A."/>
            <person name="Schneider C."/>
            <person name="Schoenbach C."/>
            <person name="Sekiguchi K."/>
            <person name="Semple C.A."/>
            <person name="Seno S."/>
            <person name="Sessa L."/>
            <person name="Sheng Y."/>
            <person name="Shibata Y."/>
            <person name="Shimada H."/>
            <person name="Shimada K."/>
            <person name="Silva D."/>
            <person name="Sinclair B."/>
            <person name="Sperling S."/>
            <person name="Stupka E."/>
            <person name="Sugiura K."/>
            <person name="Sultana R."/>
            <person name="Takenaka Y."/>
            <person name="Taki K."/>
            <person name="Tammoja K."/>
            <person name="Tan S.L."/>
            <person name="Tang S."/>
            <person name="Taylor M.S."/>
            <person name="Tegner J."/>
            <person name="Teichmann S.A."/>
            <person name="Ueda H.R."/>
            <person name="van Nimwegen E."/>
            <person name="Verardo R."/>
            <person name="Wei C.L."/>
            <person name="Yagi K."/>
            <person name="Yamanishi H."/>
            <person name="Zabarovsky E."/>
            <person name="Zhu S."/>
            <person name="Zimmer A."/>
            <person name="Hide W."/>
            <person name="Bult C."/>
            <person name="Grimmond S.M."/>
            <person name="Teasdale R.D."/>
            <person name="Liu E.T."/>
            <person name="Brusic V."/>
            <person name="Quackenbush J."/>
            <person name="Wahlestedt C."/>
            <person name="Mattick J.S."/>
            <person name="Hume D.A."/>
            <person name="Kai C."/>
            <person name="Sasaki D."/>
            <person name="Tomaru Y."/>
            <person name="Fukuda S."/>
            <person name="Kanamori-Katayama M."/>
            <person name="Suzuki M."/>
            <person name="Aoki J."/>
            <person name="Arakawa T."/>
            <person name="Iida J."/>
            <person name="Imamura K."/>
            <person name="Itoh M."/>
            <person name="Kato T."/>
            <person name="Kawaji H."/>
            <person name="Kawagashira N."/>
            <person name="Kawashima T."/>
            <person name="Kojima M."/>
            <person name="Kondo S."/>
            <person name="Konno H."/>
            <person name="Nakano K."/>
            <person name="Ninomiya N."/>
            <person name="Nishio T."/>
            <person name="Okada M."/>
            <person name="Plessy C."/>
            <person name="Shibata K."/>
            <person name="Shiraki T."/>
            <person name="Suzuki S."/>
            <person name="Tagami M."/>
            <person name="Waki K."/>
            <person name="Watahiki A."/>
            <person name="Okamura-Oho Y."/>
            <person name="Suzuki H."/>
            <person name="Kawai J."/>
            <person name="Hayashizaki Y."/>
        </authorList>
    </citation>
    <scope>NUCLEOTIDE SEQUENCE [LARGE SCALE MRNA] (ISOFORM 1)</scope>
    <source>
        <strain>C57BL/6J</strain>
        <tissue>Corpora quadrigemina</tissue>
    </source>
</reference>
<reference key="2">
    <citation type="journal article" date="1998" name="Nucleic Acids Res.">
        <title>Drosophila clipper/CPSF 30K is a post-transcriptionally regulated nuclear protein that binds RNA containing GC clusters.</title>
        <authorList>
            <person name="Bai C."/>
            <person name="Tolias P.P."/>
        </authorList>
    </citation>
    <scope>NUCLEOTIDE SEQUENCE [MRNA] OF 17-211 (ISOFORM 2)</scope>
    <scope>FUNCTION</scope>
    <source>
        <strain>C57BL/6J</strain>
        <tissue>Embryo</tissue>
    </source>
</reference>
<reference key="3">
    <citation type="journal article" date="2004" name="Genome Res.">
        <title>The status, quality, and expansion of the NIH full-length cDNA project: the Mammalian Gene Collection (MGC).</title>
        <authorList>
            <consortium name="The MGC Project Team"/>
        </authorList>
    </citation>
    <scope>NUCLEOTIDE SEQUENCE [LARGE SCALE MRNA] OF 45-211 (ISOFORM 3)</scope>
    <source>
        <strain>C57BL/6J</strain>
        <tissue>Brain</tissue>
    </source>
</reference>
<keyword id="KW-0025">Alternative splicing</keyword>
<keyword id="KW-0479">Metal-binding</keyword>
<keyword id="KW-0507">mRNA processing</keyword>
<keyword id="KW-0539">Nucleus</keyword>
<keyword id="KW-0597">Phosphoprotein</keyword>
<keyword id="KW-1185">Reference proteome</keyword>
<keyword id="KW-0677">Repeat</keyword>
<keyword id="KW-0694">RNA-binding</keyword>
<keyword id="KW-0862">Zinc</keyword>
<keyword id="KW-0863">Zinc-finger</keyword>
<protein>
    <recommendedName>
        <fullName>Cleavage and polyadenylation specificity factor subunit 4</fullName>
    </recommendedName>
    <alternativeName>
        <fullName>Cleavage and polyadenylation specificity factor 30 kDa subunit</fullName>
        <shortName>CPSF 30 kDa subunit</shortName>
    </alternativeName>
    <alternativeName>
        <fullName>Clipper homolog</fullName>
    </alternativeName>
    <alternativeName>
        <fullName>Clipper/CPSF 30K</fullName>
    </alternativeName>
</protein>
<accession>Q8BQZ5</accession>
<accession>O54930</accession>
<dbReference type="EMBL" id="AK046064">
    <property type="protein sequence ID" value="BAC32587.1"/>
    <property type="molecule type" value="mRNA"/>
</dbReference>
<dbReference type="EMBL" id="AF033201">
    <property type="protein sequence ID" value="AAC53567.1"/>
    <property type="status" value="ALT_INIT"/>
    <property type="molecule type" value="mRNA"/>
</dbReference>
<dbReference type="EMBL" id="BC057067">
    <property type="protein sequence ID" value="AAH57067.1"/>
    <property type="status" value="ALT_INIT"/>
    <property type="molecule type" value="mRNA"/>
</dbReference>
<dbReference type="CCDS" id="CCDS19859.1">
    <molecule id="Q8BQZ5-1"/>
</dbReference>
<dbReference type="RefSeq" id="NP_001278177.1">
    <property type="nucleotide sequence ID" value="NM_001291248.1"/>
</dbReference>
<dbReference type="RefSeq" id="NP_001278178.1">
    <property type="nucleotide sequence ID" value="NM_001291249.1"/>
</dbReference>
<dbReference type="RefSeq" id="NP_848671.1">
    <molecule id="Q8BQZ5-1"/>
    <property type="nucleotide sequence ID" value="NM_178576.3"/>
</dbReference>
<dbReference type="SMR" id="Q8BQZ5"/>
<dbReference type="BioGRID" id="207591">
    <property type="interactions" value="2"/>
</dbReference>
<dbReference type="FunCoup" id="Q8BQZ5">
    <property type="interactions" value="3629"/>
</dbReference>
<dbReference type="STRING" id="10090.ENSMUSP00000124966"/>
<dbReference type="iPTMnet" id="Q8BQZ5"/>
<dbReference type="PhosphoSitePlus" id="Q8BQZ5"/>
<dbReference type="PaxDb" id="10090-ENSMUSP00000069243"/>
<dbReference type="PeptideAtlas" id="Q8BQZ5"/>
<dbReference type="ProteomicsDB" id="283940">
    <molecule id="Q8BQZ5-1"/>
</dbReference>
<dbReference type="ProteomicsDB" id="283941">
    <molecule id="Q8BQZ5-2"/>
</dbReference>
<dbReference type="ProteomicsDB" id="283942">
    <molecule id="Q8BQZ5-3"/>
</dbReference>
<dbReference type="Pumba" id="Q8BQZ5"/>
<dbReference type="Antibodypedia" id="16165">
    <property type="antibodies" value="223 antibodies from 30 providers"/>
</dbReference>
<dbReference type="DNASU" id="54188"/>
<dbReference type="Ensembl" id="ENSMUST00000070487.12">
    <molecule id="Q8BQZ5-1"/>
    <property type="protein sequence ID" value="ENSMUSP00000069243.6"/>
    <property type="gene ID" value="ENSMUSG00000029625.17"/>
</dbReference>
<dbReference type="GeneID" id="54188"/>
<dbReference type="KEGG" id="mmu:54188"/>
<dbReference type="UCSC" id="uc009amj.2">
    <molecule id="Q8BQZ5-1"/>
    <property type="organism name" value="mouse"/>
</dbReference>
<dbReference type="AGR" id="MGI:1861602"/>
<dbReference type="CTD" id="10898"/>
<dbReference type="MGI" id="MGI:1861602">
    <property type="gene designation" value="Cpsf4"/>
</dbReference>
<dbReference type="VEuPathDB" id="HostDB:ENSMUSG00000029625"/>
<dbReference type="eggNOG" id="KOG1040">
    <property type="taxonomic scope" value="Eukaryota"/>
</dbReference>
<dbReference type="GeneTree" id="ENSGT00940000155520"/>
<dbReference type="InParanoid" id="Q8BQZ5"/>
<dbReference type="PhylomeDB" id="Q8BQZ5"/>
<dbReference type="TreeFam" id="TF314871"/>
<dbReference type="Reactome" id="R-MMU-159231">
    <property type="pathway name" value="Transport of Mature mRNA Derived from an Intronless Transcript"/>
</dbReference>
<dbReference type="Reactome" id="R-MMU-72187">
    <property type="pathway name" value="mRNA 3'-end processing"/>
</dbReference>
<dbReference type="Reactome" id="R-MMU-72203">
    <property type="pathway name" value="Processing of Capped Intron-Containing Pre-mRNA"/>
</dbReference>
<dbReference type="Reactome" id="R-MMU-73856">
    <property type="pathway name" value="RNA Polymerase II Transcription Termination"/>
</dbReference>
<dbReference type="Reactome" id="R-MMU-77595">
    <property type="pathway name" value="Processing of Intronless Pre-mRNAs"/>
</dbReference>
<dbReference type="BioGRID-ORCS" id="54188">
    <property type="hits" value="28 hits in 80 CRISPR screens"/>
</dbReference>
<dbReference type="ChiTaRS" id="Cpsf4">
    <property type="organism name" value="mouse"/>
</dbReference>
<dbReference type="PRO" id="PR:Q8BQZ5"/>
<dbReference type="Proteomes" id="UP000000589">
    <property type="component" value="Chromosome 5"/>
</dbReference>
<dbReference type="RNAct" id="Q8BQZ5">
    <property type="molecule type" value="protein"/>
</dbReference>
<dbReference type="Bgee" id="ENSMUSG00000029625">
    <property type="expression patterns" value="Expressed in floor plate of midbrain and 278 other cell types or tissues"/>
</dbReference>
<dbReference type="ExpressionAtlas" id="Q8BQZ5">
    <property type="expression patterns" value="baseline and differential"/>
</dbReference>
<dbReference type="GO" id="GO:0005847">
    <property type="term" value="C:mRNA cleavage and polyadenylation specificity factor complex"/>
    <property type="evidence" value="ECO:0000250"/>
    <property type="project" value="UniProtKB"/>
</dbReference>
<dbReference type="GO" id="GO:0003723">
    <property type="term" value="F:RNA binding"/>
    <property type="evidence" value="ECO:0007669"/>
    <property type="project" value="UniProtKB-KW"/>
</dbReference>
<dbReference type="GO" id="GO:0008270">
    <property type="term" value="F:zinc ion binding"/>
    <property type="evidence" value="ECO:0007669"/>
    <property type="project" value="UniProtKB-KW"/>
</dbReference>
<dbReference type="GO" id="GO:0006397">
    <property type="term" value="P:mRNA processing"/>
    <property type="evidence" value="ECO:0007669"/>
    <property type="project" value="UniProtKB-KW"/>
</dbReference>
<dbReference type="FunFam" id="4.10.60.10:FF:000008">
    <property type="entry name" value="Cleavage and polyadenylation specificity factor subunit 4"/>
    <property type="match status" value="1"/>
</dbReference>
<dbReference type="Gene3D" id="4.10.1000.10">
    <property type="entry name" value="Zinc finger, CCCH-type"/>
    <property type="match status" value="1"/>
</dbReference>
<dbReference type="Gene3D" id="4.10.60.10">
    <property type="entry name" value="Zinc finger, CCHC-type"/>
    <property type="match status" value="1"/>
</dbReference>
<dbReference type="InterPro" id="IPR045348">
    <property type="entry name" value="CPSF4/Yth1"/>
</dbReference>
<dbReference type="InterPro" id="IPR000571">
    <property type="entry name" value="Znf_CCCH"/>
</dbReference>
<dbReference type="InterPro" id="IPR036855">
    <property type="entry name" value="Znf_CCCH_sf"/>
</dbReference>
<dbReference type="InterPro" id="IPR001878">
    <property type="entry name" value="Znf_CCHC"/>
</dbReference>
<dbReference type="InterPro" id="IPR036875">
    <property type="entry name" value="Znf_CCHC_sf"/>
</dbReference>
<dbReference type="PANTHER" id="PTHR23102:SF18">
    <property type="entry name" value="CLEAVAGE AND POLYADENYLATION SPECIFICITY FACTOR SUBUNIT 4"/>
    <property type="match status" value="1"/>
</dbReference>
<dbReference type="PANTHER" id="PTHR23102">
    <property type="entry name" value="CLEAVAGE AND POLYADENYLATION SPECIFICITY FACTOR SUBUNIT 4-RELATED"/>
    <property type="match status" value="1"/>
</dbReference>
<dbReference type="Pfam" id="PF00642">
    <property type="entry name" value="zf-CCCH"/>
    <property type="match status" value="2"/>
</dbReference>
<dbReference type="Pfam" id="PF00098">
    <property type="entry name" value="zf-CCHC"/>
    <property type="match status" value="1"/>
</dbReference>
<dbReference type="SMART" id="SM00343">
    <property type="entry name" value="ZnF_C2HC"/>
    <property type="match status" value="1"/>
</dbReference>
<dbReference type="SMART" id="SM00356">
    <property type="entry name" value="ZnF_C3H1"/>
    <property type="match status" value="4"/>
</dbReference>
<dbReference type="SUPFAM" id="SSF90229">
    <property type="entry name" value="CCCH zinc finger"/>
    <property type="match status" value="2"/>
</dbReference>
<dbReference type="SUPFAM" id="SSF57756">
    <property type="entry name" value="Retrovirus zinc finger-like domains"/>
    <property type="match status" value="1"/>
</dbReference>
<dbReference type="PROSITE" id="PS50103">
    <property type="entry name" value="ZF_C3H1"/>
    <property type="match status" value="3"/>
</dbReference>
<dbReference type="PROSITE" id="PS50158">
    <property type="entry name" value="ZF_CCHC"/>
    <property type="match status" value="1"/>
</dbReference>
<organism>
    <name type="scientific">Mus musculus</name>
    <name type="common">Mouse</name>
    <dbReference type="NCBI Taxonomy" id="10090"/>
    <lineage>
        <taxon>Eukaryota</taxon>
        <taxon>Metazoa</taxon>
        <taxon>Chordata</taxon>
        <taxon>Craniata</taxon>
        <taxon>Vertebrata</taxon>
        <taxon>Euteleostomi</taxon>
        <taxon>Mammalia</taxon>
        <taxon>Eutheria</taxon>
        <taxon>Euarchontoglires</taxon>
        <taxon>Glires</taxon>
        <taxon>Rodentia</taxon>
        <taxon>Myomorpha</taxon>
        <taxon>Muroidea</taxon>
        <taxon>Muridae</taxon>
        <taxon>Murinae</taxon>
        <taxon>Mus</taxon>
        <taxon>Mus</taxon>
    </lineage>
</organism>
<comment type="function">
    <text evidence="1 5">Component of the cleavage and polyadenylation specificity factor (CPSF) complex that play a key role in pre-mRNA 3'-end formation, recognizing the AAUAAA signal sequence and interacting with poly(A) polymerase and other factors to bring about cleavage and poly(A) addition. CPSF4 binds RNA polymers with a preference for poly(U) (By similarity).</text>
</comment>
<comment type="subunit">
    <text evidence="1">Component of the cleavage and polyadenylation specificity factor (CPSF) complex, composed of CPSF1, CPSF2, CPSF3, CPSF4 and FIP1L1. Interacts with FIP1L1 (By similarity).</text>
</comment>
<comment type="subcellular location">
    <subcellularLocation>
        <location evidence="1">Nucleus</location>
    </subcellularLocation>
</comment>
<comment type="alternative products">
    <event type="alternative splicing"/>
    <isoform>
        <id>Q8BQZ5-1</id>
        <name>1</name>
        <sequence type="displayed"/>
    </isoform>
    <isoform>
        <id>Q8BQZ5-2</id>
        <name>2</name>
        <sequence type="described" ref="VSP_008603 VSP_008604 VSP_008606 VSP_008608"/>
    </isoform>
    <isoform>
        <id>Q8BQZ5-3</id>
        <name>3</name>
        <sequence type="described" ref="VSP_008603 VSP_008605 VSP_008607"/>
    </isoform>
</comment>
<comment type="similarity">
    <text evidence="8">Belongs to the CPSF4/YTH1 family.</text>
</comment>
<comment type="sequence caution" evidence="8">
    <conflict type="erroneous initiation">
        <sequence resource="EMBL-CDS" id="AAC53567"/>
    </conflict>
</comment>
<comment type="sequence caution" evidence="8">
    <conflict type="erroneous initiation">
        <sequence resource="EMBL-CDS" id="AAH57067"/>
    </conflict>
</comment>
<gene>
    <name type="primary">Cpsf4</name>
    <name type="synonym">Cpsf30</name>
</gene>
<name>CPSF4_MOUSE</name>
<evidence type="ECO:0000250" key="1"/>
<evidence type="ECO:0000250" key="2">
    <source>
        <dbReference type="UniProtKB" id="O95639"/>
    </source>
</evidence>
<evidence type="ECO:0000255" key="3">
    <source>
        <dbReference type="PROSITE-ProRule" id="PRU00047"/>
    </source>
</evidence>
<evidence type="ECO:0000255" key="4">
    <source>
        <dbReference type="PROSITE-ProRule" id="PRU00723"/>
    </source>
</evidence>
<evidence type="ECO:0000269" key="5">
    <source>
    </source>
</evidence>
<evidence type="ECO:0000303" key="6">
    <source>
    </source>
</evidence>
<evidence type="ECO:0000303" key="7">
    <source>
    </source>
</evidence>
<evidence type="ECO:0000305" key="8"/>
<proteinExistence type="evidence at transcript level"/>
<feature type="chain" id="PRO_0000074403" description="Cleavage and polyadenylation specificity factor subunit 4">
    <location>
        <begin position="1"/>
        <end position="211"/>
    </location>
</feature>
<feature type="zinc finger region" description="C3H1-type 1" evidence="4">
    <location>
        <begin position="35"/>
        <end position="61"/>
    </location>
</feature>
<feature type="zinc finger region" description="C3H1-type 2" evidence="4">
    <location>
        <begin position="62"/>
        <end position="89"/>
    </location>
</feature>
<feature type="zinc finger region" description="C3H1-type 3" evidence="4">
    <location>
        <begin position="111"/>
        <end position="137"/>
    </location>
</feature>
<feature type="zinc finger region" description="CCHC-type" evidence="3">
    <location>
        <begin position="185"/>
        <end position="202"/>
    </location>
</feature>
<feature type="modified residue" description="Phosphoserine" evidence="2">
    <location>
        <position position="209"/>
    </location>
</feature>
<feature type="splice variant" id="VSP_008603" description="In isoform 2 and isoform 3." evidence="6 7">
    <original>G</original>
    <variation>GECSNKECPFLHIDPESKIKDCPWYDRGFCKHG</variation>
    <location>
        <position position="103"/>
    </location>
</feature>
<feature type="splice variant" id="VSP_008604" description="In isoform 2." evidence="7">
    <original>K</original>
    <variation>KQ</variation>
    <location>
        <position position="158"/>
    </location>
</feature>
<feature type="splice variant" id="VSP_008605" description="In isoform 3." evidence="6">
    <original>RAPQVIGVMQSQNSSAGNRGPR</original>
    <variation>VLYPAASLATLACRDGLITHSV</variation>
    <location>
        <begin position="159"/>
        <end position="180"/>
    </location>
</feature>
<feature type="splice variant" id="VSP_008606" description="In isoform 2." evidence="7">
    <original>AGNRGPRPLEQVTCY</original>
    <variation>DSSSSSSSWNHCGAA</variation>
    <location>
        <begin position="174"/>
        <end position="188"/>
    </location>
</feature>
<feature type="splice variant" id="VSP_008607" description="In isoform 3." evidence="6">
    <location>
        <begin position="181"/>
        <end position="211"/>
    </location>
</feature>
<feature type="splice variant" id="VSP_008608" description="In isoform 2." evidence="7">
    <location>
        <begin position="189"/>
        <end position="211"/>
    </location>
</feature>